<gene>
    <name evidence="1" type="primary">rpmE</name>
    <name type="ordered locus">SeD_A4496</name>
</gene>
<keyword id="KW-0479">Metal-binding</keyword>
<keyword id="KW-0687">Ribonucleoprotein</keyword>
<keyword id="KW-0689">Ribosomal protein</keyword>
<keyword id="KW-0694">RNA-binding</keyword>
<keyword id="KW-0699">rRNA-binding</keyword>
<keyword id="KW-0862">Zinc</keyword>
<protein>
    <recommendedName>
        <fullName evidence="1">Large ribosomal subunit protein bL31</fullName>
    </recommendedName>
    <alternativeName>
        <fullName evidence="2">50S ribosomal protein L31</fullName>
    </alternativeName>
</protein>
<evidence type="ECO:0000255" key="1">
    <source>
        <dbReference type="HAMAP-Rule" id="MF_00501"/>
    </source>
</evidence>
<evidence type="ECO:0000305" key="2"/>
<name>RL31_SALDC</name>
<reference key="1">
    <citation type="journal article" date="2011" name="J. Bacteriol.">
        <title>Comparative genomics of 28 Salmonella enterica isolates: evidence for CRISPR-mediated adaptive sublineage evolution.</title>
        <authorList>
            <person name="Fricke W.F."/>
            <person name="Mammel M.K."/>
            <person name="McDermott P.F."/>
            <person name="Tartera C."/>
            <person name="White D.G."/>
            <person name="Leclerc J.E."/>
            <person name="Ravel J."/>
            <person name="Cebula T.A."/>
        </authorList>
    </citation>
    <scope>NUCLEOTIDE SEQUENCE [LARGE SCALE GENOMIC DNA]</scope>
    <source>
        <strain>CT_02021853</strain>
    </source>
</reference>
<organism>
    <name type="scientific">Salmonella dublin (strain CT_02021853)</name>
    <dbReference type="NCBI Taxonomy" id="439851"/>
    <lineage>
        <taxon>Bacteria</taxon>
        <taxon>Pseudomonadati</taxon>
        <taxon>Pseudomonadota</taxon>
        <taxon>Gammaproteobacteria</taxon>
        <taxon>Enterobacterales</taxon>
        <taxon>Enterobacteriaceae</taxon>
        <taxon>Salmonella</taxon>
    </lineage>
</organism>
<sequence length="70" mass="7719">MKKGIHPNYVEITATCSCGNVIKTHSTVGHDLNLDVCGKCHPFFTGKQRVVDTGGRVERFNKRFSIPGSK</sequence>
<feature type="chain" id="PRO_1000126716" description="Large ribosomal subunit protein bL31">
    <location>
        <begin position="1"/>
        <end position="70"/>
    </location>
</feature>
<feature type="binding site" evidence="1">
    <location>
        <position position="16"/>
    </location>
    <ligand>
        <name>Zn(2+)</name>
        <dbReference type="ChEBI" id="CHEBI:29105"/>
    </ligand>
</feature>
<feature type="binding site" evidence="1">
    <location>
        <position position="18"/>
    </location>
    <ligand>
        <name>Zn(2+)</name>
        <dbReference type="ChEBI" id="CHEBI:29105"/>
    </ligand>
</feature>
<feature type="binding site" evidence="1">
    <location>
        <position position="37"/>
    </location>
    <ligand>
        <name>Zn(2+)</name>
        <dbReference type="ChEBI" id="CHEBI:29105"/>
    </ligand>
</feature>
<feature type="binding site" evidence="1">
    <location>
        <position position="40"/>
    </location>
    <ligand>
        <name>Zn(2+)</name>
        <dbReference type="ChEBI" id="CHEBI:29105"/>
    </ligand>
</feature>
<comment type="function">
    <text evidence="1">Binds the 23S rRNA.</text>
</comment>
<comment type="cofactor">
    <cofactor evidence="1">
        <name>Zn(2+)</name>
        <dbReference type="ChEBI" id="CHEBI:29105"/>
    </cofactor>
    <text evidence="1">Binds 1 zinc ion per subunit.</text>
</comment>
<comment type="subunit">
    <text evidence="1">Part of the 50S ribosomal subunit.</text>
</comment>
<comment type="similarity">
    <text evidence="1">Belongs to the bacterial ribosomal protein bL31 family. Type A subfamily.</text>
</comment>
<proteinExistence type="inferred from homology"/>
<accession>B5FPU5</accession>
<dbReference type="EMBL" id="CP001144">
    <property type="protein sequence ID" value="ACH76472.1"/>
    <property type="molecule type" value="Genomic_DNA"/>
</dbReference>
<dbReference type="RefSeq" id="WP_000715284.1">
    <property type="nucleotide sequence ID" value="NC_011205.1"/>
</dbReference>
<dbReference type="SMR" id="B5FPU5"/>
<dbReference type="GeneID" id="66758349"/>
<dbReference type="KEGG" id="sed:SeD_A4496"/>
<dbReference type="HOGENOM" id="CLU_114306_4_3_6"/>
<dbReference type="Proteomes" id="UP000008322">
    <property type="component" value="Chromosome"/>
</dbReference>
<dbReference type="GO" id="GO:1990904">
    <property type="term" value="C:ribonucleoprotein complex"/>
    <property type="evidence" value="ECO:0007669"/>
    <property type="project" value="UniProtKB-KW"/>
</dbReference>
<dbReference type="GO" id="GO:0005840">
    <property type="term" value="C:ribosome"/>
    <property type="evidence" value="ECO:0007669"/>
    <property type="project" value="UniProtKB-KW"/>
</dbReference>
<dbReference type="GO" id="GO:0046872">
    <property type="term" value="F:metal ion binding"/>
    <property type="evidence" value="ECO:0007669"/>
    <property type="project" value="UniProtKB-KW"/>
</dbReference>
<dbReference type="GO" id="GO:0019843">
    <property type="term" value="F:rRNA binding"/>
    <property type="evidence" value="ECO:0007669"/>
    <property type="project" value="UniProtKB-KW"/>
</dbReference>
<dbReference type="GO" id="GO:0003735">
    <property type="term" value="F:structural constituent of ribosome"/>
    <property type="evidence" value="ECO:0007669"/>
    <property type="project" value="InterPro"/>
</dbReference>
<dbReference type="GO" id="GO:0006412">
    <property type="term" value="P:translation"/>
    <property type="evidence" value="ECO:0007669"/>
    <property type="project" value="UniProtKB-UniRule"/>
</dbReference>
<dbReference type="FunFam" id="4.10.830.30:FF:000001">
    <property type="entry name" value="50S ribosomal protein L31"/>
    <property type="match status" value="1"/>
</dbReference>
<dbReference type="Gene3D" id="4.10.830.30">
    <property type="entry name" value="Ribosomal protein L31"/>
    <property type="match status" value="1"/>
</dbReference>
<dbReference type="HAMAP" id="MF_00501">
    <property type="entry name" value="Ribosomal_bL31_1"/>
    <property type="match status" value="1"/>
</dbReference>
<dbReference type="InterPro" id="IPR034704">
    <property type="entry name" value="Ribosomal_bL28/bL31-like_sf"/>
</dbReference>
<dbReference type="InterPro" id="IPR002150">
    <property type="entry name" value="Ribosomal_bL31"/>
</dbReference>
<dbReference type="InterPro" id="IPR027491">
    <property type="entry name" value="Ribosomal_bL31_A"/>
</dbReference>
<dbReference type="InterPro" id="IPR042105">
    <property type="entry name" value="Ribosomal_bL31_sf"/>
</dbReference>
<dbReference type="NCBIfam" id="TIGR00105">
    <property type="entry name" value="L31"/>
    <property type="match status" value="1"/>
</dbReference>
<dbReference type="NCBIfam" id="NF000612">
    <property type="entry name" value="PRK00019.1"/>
    <property type="match status" value="1"/>
</dbReference>
<dbReference type="NCBIfam" id="NF001809">
    <property type="entry name" value="PRK00528.1"/>
    <property type="match status" value="1"/>
</dbReference>
<dbReference type="PANTHER" id="PTHR33280">
    <property type="entry name" value="50S RIBOSOMAL PROTEIN L31, CHLOROPLASTIC"/>
    <property type="match status" value="1"/>
</dbReference>
<dbReference type="PANTHER" id="PTHR33280:SF6">
    <property type="entry name" value="LARGE RIBOSOMAL SUBUNIT PROTEIN BL31A"/>
    <property type="match status" value="1"/>
</dbReference>
<dbReference type="Pfam" id="PF01197">
    <property type="entry name" value="Ribosomal_L31"/>
    <property type="match status" value="1"/>
</dbReference>
<dbReference type="PRINTS" id="PR01249">
    <property type="entry name" value="RIBOSOMALL31"/>
</dbReference>
<dbReference type="SUPFAM" id="SSF143800">
    <property type="entry name" value="L28p-like"/>
    <property type="match status" value="1"/>
</dbReference>
<dbReference type="PROSITE" id="PS01143">
    <property type="entry name" value="RIBOSOMAL_L31"/>
    <property type="match status" value="1"/>
</dbReference>